<evidence type="ECO:0000255" key="1"/>
<evidence type="ECO:0000256" key="2">
    <source>
        <dbReference type="SAM" id="MobiDB-lite"/>
    </source>
</evidence>
<evidence type="ECO:0000305" key="3"/>
<accession>A6NN73</accession>
<organism>
    <name type="scientific">Homo sapiens</name>
    <name type="common">Human</name>
    <dbReference type="NCBI Taxonomy" id="9606"/>
    <lineage>
        <taxon>Eukaryota</taxon>
        <taxon>Metazoa</taxon>
        <taxon>Chordata</taxon>
        <taxon>Craniata</taxon>
        <taxon>Vertebrata</taxon>
        <taxon>Euteleostomi</taxon>
        <taxon>Mammalia</taxon>
        <taxon>Eutheria</taxon>
        <taxon>Euarchontoglires</taxon>
        <taxon>Primates</taxon>
        <taxon>Haplorrhini</taxon>
        <taxon>Catarrhini</taxon>
        <taxon>Hominidae</taxon>
        <taxon>Homo</taxon>
    </lineage>
</organism>
<comment type="similarity">
    <text evidence="3">Belongs to the GOLGA8 family.</text>
</comment>
<comment type="caution">
    <text evidence="3">A family of highly similar proteins (GOLGA8A, GOLGA8B, GOLGA8C, GOLGA8D, GOLGA8E, GOLGA8F, GOLGA8G) are encoded by a repeated region on chromosome 15q11-15q13. Our sequences are in agreement with HGNC nomenclature.</text>
</comment>
<comment type="caution">
    <text evidence="3">Defined as a pseudogene by HGNC. However, proteomics data suggest the existence of the protein.</text>
</comment>
<dbReference type="EMBL" id="AC131280">
    <property type="status" value="NOT_ANNOTATED_CDS"/>
    <property type="molecule type" value="Genomic_DNA"/>
</dbReference>
<dbReference type="SMR" id="A6NN73"/>
<dbReference type="FunCoup" id="A6NN73">
    <property type="interactions" value="50"/>
</dbReference>
<dbReference type="IntAct" id="A6NN73">
    <property type="interactions" value="2"/>
</dbReference>
<dbReference type="STRING" id="9606.ENSP00000454322"/>
<dbReference type="BioMuta" id="HGNC:32375"/>
<dbReference type="jPOST" id="A6NN73"/>
<dbReference type="MassIVE" id="A6NN73"/>
<dbReference type="PeptideAtlas" id="A6NN73"/>
<dbReference type="AGR" id="HGNC:32375"/>
<dbReference type="GeneCards" id="GOLGA8CP"/>
<dbReference type="HGNC" id="HGNC:32375">
    <property type="gene designation" value="GOLGA8CP"/>
</dbReference>
<dbReference type="neXtProt" id="NX_A6NN73"/>
<dbReference type="InParanoid" id="A6NN73"/>
<dbReference type="PAN-GO" id="A6NN73">
    <property type="GO annotations" value="4 GO annotations based on evolutionary models"/>
</dbReference>
<dbReference type="PhylomeDB" id="A6NN73"/>
<dbReference type="PathwayCommons" id="A6NN73"/>
<dbReference type="SignaLink" id="A6NN73"/>
<dbReference type="Pharos" id="A6NN73">
    <property type="development level" value="Tdark"/>
</dbReference>
<dbReference type="Proteomes" id="UP000005640">
    <property type="component" value="Unplaced"/>
</dbReference>
<dbReference type="RNAct" id="A6NN73">
    <property type="molecule type" value="protein"/>
</dbReference>
<dbReference type="GO" id="GO:0005801">
    <property type="term" value="C:cis-Golgi network"/>
    <property type="evidence" value="ECO:0000318"/>
    <property type="project" value="GO_Central"/>
</dbReference>
<dbReference type="GO" id="GO:0000137">
    <property type="term" value="C:Golgi cis cisterna"/>
    <property type="evidence" value="ECO:0000318"/>
    <property type="project" value="GO_Central"/>
</dbReference>
<dbReference type="GO" id="GO:0032580">
    <property type="term" value="C:Golgi cisterna membrane"/>
    <property type="evidence" value="ECO:0000318"/>
    <property type="project" value="GO_Central"/>
</dbReference>
<dbReference type="GO" id="GO:0007030">
    <property type="term" value="P:Golgi organization"/>
    <property type="evidence" value="ECO:0000318"/>
    <property type="project" value="GO_Central"/>
</dbReference>
<dbReference type="InterPro" id="IPR043937">
    <property type="entry name" value="GM130_C"/>
</dbReference>
<dbReference type="InterPro" id="IPR043976">
    <property type="entry name" value="GOLGA_cons_dom"/>
</dbReference>
<dbReference type="InterPro" id="IPR024858">
    <property type="entry name" value="Golgin_A"/>
</dbReference>
<dbReference type="PANTHER" id="PTHR10881:SF7">
    <property type="entry name" value="GOLGIN SUBFAMILY A MEMBER 8C-RELATED"/>
    <property type="match status" value="1"/>
</dbReference>
<dbReference type="PANTHER" id="PTHR10881">
    <property type="entry name" value="GOLGIN SUBFAMILY A MEMBER-RELATED"/>
    <property type="match status" value="1"/>
</dbReference>
<dbReference type="Pfam" id="PF19046">
    <property type="entry name" value="GM130_C"/>
    <property type="match status" value="1"/>
</dbReference>
<dbReference type="Pfam" id="PF15070">
    <property type="entry name" value="GOLGA2L5"/>
    <property type="match status" value="1"/>
</dbReference>
<gene>
    <name type="primary">GOLGA8CP</name>
    <name type="synonym">GOLGA8C</name>
</gene>
<keyword id="KW-0175">Coiled coil</keyword>
<keyword id="KW-1185">Reference proteome</keyword>
<protein>
    <recommendedName>
        <fullName>Golgin subfamily A member 8C</fullName>
    </recommendedName>
</protein>
<reference key="1">
    <citation type="journal article" date="2006" name="Nature">
        <title>Analysis of the DNA sequence and duplication history of human chromosome 15.</title>
        <authorList>
            <person name="Zody M.C."/>
            <person name="Garber M."/>
            <person name="Sharpe T."/>
            <person name="Young S.K."/>
            <person name="Rowen L."/>
            <person name="O'Neill K."/>
            <person name="Whittaker C.A."/>
            <person name="Kamal M."/>
            <person name="Chang J.L."/>
            <person name="Cuomo C.A."/>
            <person name="Dewar K."/>
            <person name="FitzGerald M.G."/>
            <person name="Kodira C.D."/>
            <person name="Madan A."/>
            <person name="Qin S."/>
            <person name="Yang X."/>
            <person name="Abbasi N."/>
            <person name="Abouelleil A."/>
            <person name="Arachchi H.M."/>
            <person name="Baradarani L."/>
            <person name="Birditt B."/>
            <person name="Bloom S."/>
            <person name="Bloom T."/>
            <person name="Borowsky M.L."/>
            <person name="Burke J."/>
            <person name="Butler J."/>
            <person name="Cook A."/>
            <person name="DeArellano K."/>
            <person name="DeCaprio D."/>
            <person name="Dorris L. III"/>
            <person name="Dors M."/>
            <person name="Eichler E.E."/>
            <person name="Engels R."/>
            <person name="Fahey J."/>
            <person name="Fleetwood P."/>
            <person name="Friedman C."/>
            <person name="Gearin G."/>
            <person name="Hall J.L."/>
            <person name="Hensley G."/>
            <person name="Johnson E."/>
            <person name="Jones C."/>
            <person name="Kamat A."/>
            <person name="Kaur A."/>
            <person name="Locke D.P."/>
            <person name="Madan A."/>
            <person name="Munson G."/>
            <person name="Jaffe D.B."/>
            <person name="Lui A."/>
            <person name="Macdonald P."/>
            <person name="Mauceli E."/>
            <person name="Naylor J.W."/>
            <person name="Nesbitt R."/>
            <person name="Nicol R."/>
            <person name="O'Leary S.B."/>
            <person name="Ratcliffe A."/>
            <person name="Rounsley S."/>
            <person name="She X."/>
            <person name="Sneddon K.M.B."/>
            <person name="Stewart S."/>
            <person name="Sougnez C."/>
            <person name="Stone S.M."/>
            <person name="Topham K."/>
            <person name="Vincent D."/>
            <person name="Wang S."/>
            <person name="Zimmer A.R."/>
            <person name="Birren B.W."/>
            <person name="Hood L."/>
            <person name="Lander E.S."/>
            <person name="Nusbaum C."/>
        </authorList>
    </citation>
    <scope>NUCLEOTIDE SEQUENCE [LARGE SCALE GENOMIC DNA]</scope>
</reference>
<sequence>MAEETRQSKLAAAKRKLKEYWQRNSPGVPAGAKRNRKTNGSIHETATSGGCHSPGDSSSTSSSLHAPQSPCQELAVVPDSRSVKVSQLKNTIKSLKQQKKQVEHQLEEEKKANNEKQKAERGLEVQIQRLNIQKGKLNTDLYHTKRSLRYFEEESKDLAVRLQHSLQRKGELERALSAVTATQKKKAERFSSRSKARMEWKLEQSMREQALLKAQLTQLKESLKEVQLERDEYAEHLKGERARWQQRMRKMSQEVCSLKKEKKHDKYRVETLERSLSKLKHQMAEPLPPEPPAVPSEVELQHLRKELERVAGALQAQVEYNQRISLLNEGQKERLREQEERLQEQQERLREQEERLQQLAEPQNSFKELNNENKSVLQLEQQVKELQEKLGKRLAHPVASAQKEPEAAVPAPGPGGESSGFMDHLEEKADLSELVEKEELGFFQYYRERCHQKVYHPITKPGGSAKDAAPGGGHHQAGPGQGGDEGEAAGAAGDGVAAGGDYKGHSKFLVTAQNPAHEPSPGAPAPQELGAAHKHGDLCEVSLTDSVEPVQGETREGSPHDKPTAQPIVQDHQEHPGLGSNCCVPFFCWAWPPRRRR</sequence>
<proteinExistence type="inferred from homology"/>
<name>GOG8C_HUMAN</name>
<feature type="chain" id="PRO_0000332960" description="Golgin subfamily A member 8C">
    <location>
        <begin position="1"/>
        <end position="597"/>
    </location>
</feature>
<feature type="region of interest" description="Disordered" evidence="2">
    <location>
        <begin position="1"/>
        <end position="80"/>
    </location>
</feature>
<feature type="region of interest" description="Disordered" evidence="2">
    <location>
        <begin position="96"/>
        <end position="120"/>
    </location>
</feature>
<feature type="region of interest" description="Disordered" evidence="2">
    <location>
        <begin position="390"/>
        <end position="422"/>
    </location>
</feature>
<feature type="region of interest" description="Disordered" evidence="2">
    <location>
        <begin position="457"/>
        <end position="498"/>
    </location>
</feature>
<feature type="region of interest" description="Disordered" evidence="2">
    <location>
        <begin position="549"/>
        <end position="576"/>
    </location>
</feature>
<feature type="coiled-coil region" evidence="1">
    <location>
        <begin position="81"/>
        <end position="141"/>
    </location>
</feature>
<feature type="coiled-coil region" evidence="1">
    <location>
        <begin position="199"/>
        <end position="255"/>
    </location>
</feature>
<feature type="coiled-coil region" evidence="1">
    <location>
        <begin position="296"/>
        <end position="394"/>
    </location>
</feature>
<feature type="compositionally biased region" description="Polar residues" evidence="2">
    <location>
        <begin position="38"/>
        <end position="50"/>
    </location>
</feature>
<feature type="compositionally biased region" description="Low complexity" evidence="2">
    <location>
        <begin position="53"/>
        <end position="70"/>
    </location>
</feature>
<feature type="compositionally biased region" description="Basic and acidic residues" evidence="2">
    <location>
        <begin position="100"/>
        <end position="120"/>
    </location>
</feature>
<feature type="compositionally biased region" description="Gly residues" evidence="2">
    <location>
        <begin position="470"/>
        <end position="483"/>
    </location>
</feature>
<feature type="compositionally biased region" description="Basic and acidic residues" evidence="2">
    <location>
        <begin position="553"/>
        <end position="563"/>
    </location>
</feature>